<gene>
    <name evidence="1" type="primary">hfq</name>
    <name type="ordered locus">SSPA3878</name>
</gene>
<keyword id="KW-0694">RNA-binding</keyword>
<keyword id="KW-0346">Stress response</keyword>
<organism>
    <name type="scientific">Salmonella paratyphi A (strain AKU_12601)</name>
    <dbReference type="NCBI Taxonomy" id="554290"/>
    <lineage>
        <taxon>Bacteria</taxon>
        <taxon>Pseudomonadati</taxon>
        <taxon>Pseudomonadota</taxon>
        <taxon>Gammaproteobacteria</taxon>
        <taxon>Enterobacterales</taxon>
        <taxon>Enterobacteriaceae</taxon>
        <taxon>Salmonella</taxon>
    </lineage>
</organism>
<evidence type="ECO:0000255" key="1">
    <source>
        <dbReference type="HAMAP-Rule" id="MF_00436"/>
    </source>
</evidence>
<evidence type="ECO:0000255" key="2">
    <source>
        <dbReference type="PROSITE-ProRule" id="PRU01346"/>
    </source>
</evidence>
<evidence type="ECO:0000256" key="3">
    <source>
        <dbReference type="SAM" id="MobiDB-lite"/>
    </source>
</evidence>
<reference key="1">
    <citation type="journal article" date="2009" name="BMC Genomics">
        <title>Pseudogene accumulation in the evolutionary histories of Salmonella enterica serovars Paratyphi A and Typhi.</title>
        <authorList>
            <person name="Holt K.E."/>
            <person name="Thomson N.R."/>
            <person name="Wain J."/>
            <person name="Langridge G.C."/>
            <person name="Hasan R."/>
            <person name="Bhutta Z.A."/>
            <person name="Quail M.A."/>
            <person name="Norbertczak H."/>
            <person name="Walker D."/>
            <person name="Simmonds M."/>
            <person name="White B."/>
            <person name="Bason N."/>
            <person name="Mungall K."/>
            <person name="Dougan G."/>
            <person name="Parkhill J."/>
        </authorList>
    </citation>
    <scope>NUCLEOTIDE SEQUENCE [LARGE SCALE GENOMIC DNA]</scope>
    <source>
        <strain>AKU_12601</strain>
    </source>
</reference>
<protein>
    <recommendedName>
        <fullName evidence="1">RNA-binding protein Hfq</fullName>
    </recommendedName>
</protein>
<dbReference type="EMBL" id="FM200053">
    <property type="protein sequence ID" value="CAR62165.1"/>
    <property type="molecule type" value="Genomic_DNA"/>
</dbReference>
<dbReference type="RefSeq" id="WP_001051875.1">
    <property type="nucleotide sequence ID" value="NC_011147.1"/>
</dbReference>
<dbReference type="SMR" id="B5BKI1"/>
<dbReference type="KEGG" id="sek:SSPA3878"/>
<dbReference type="HOGENOM" id="CLU_113688_2_1_6"/>
<dbReference type="Proteomes" id="UP000001869">
    <property type="component" value="Chromosome"/>
</dbReference>
<dbReference type="GO" id="GO:0005829">
    <property type="term" value="C:cytosol"/>
    <property type="evidence" value="ECO:0007669"/>
    <property type="project" value="TreeGrafter"/>
</dbReference>
<dbReference type="GO" id="GO:0003723">
    <property type="term" value="F:RNA binding"/>
    <property type="evidence" value="ECO:0007669"/>
    <property type="project" value="UniProtKB-UniRule"/>
</dbReference>
<dbReference type="GO" id="GO:0006355">
    <property type="term" value="P:regulation of DNA-templated transcription"/>
    <property type="evidence" value="ECO:0007669"/>
    <property type="project" value="InterPro"/>
</dbReference>
<dbReference type="GO" id="GO:0043487">
    <property type="term" value="P:regulation of RNA stability"/>
    <property type="evidence" value="ECO:0007669"/>
    <property type="project" value="TreeGrafter"/>
</dbReference>
<dbReference type="GO" id="GO:0045974">
    <property type="term" value="P:regulation of translation, ncRNA-mediated"/>
    <property type="evidence" value="ECO:0007669"/>
    <property type="project" value="TreeGrafter"/>
</dbReference>
<dbReference type="CDD" id="cd01716">
    <property type="entry name" value="Hfq"/>
    <property type="match status" value="1"/>
</dbReference>
<dbReference type="FunFam" id="2.30.30.100:FF:000001">
    <property type="entry name" value="RNA-binding protein Hfq"/>
    <property type="match status" value="1"/>
</dbReference>
<dbReference type="Gene3D" id="2.30.30.100">
    <property type="match status" value="1"/>
</dbReference>
<dbReference type="HAMAP" id="MF_00436">
    <property type="entry name" value="Hfq"/>
    <property type="match status" value="1"/>
</dbReference>
<dbReference type="InterPro" id="IPR005001">
    <property type="entry name" value="Hfq"/>
</dbReference>
<dbReference type="InterPro" id="IPR010920">
    <property type="entry name" value="LSM_dom_sf"/>
</dbReference>
<dbReference type="InterPro" id="IPR047575">
    <property type="entry name" value="Sm"/>
</dbReference>
<dbReference type="NCBIfam" id="TIGR02383">
    <property type="entry name" value="Hfq"/>
    <property type="match status" value="1"/>
</dbReference>
<dbReference type="NCBIfam" id="NF001602">
    <property type="entry name" value="PRK00395.1"/>
    <property type="match status" value="1"/>
</dbReference>
<dbReference type="PANTHER" id="PTHR34772">
    <property type="entry name" value="RNA-BINDING PROTEIN HFQ"/>
    <property type="match status" value="1"/>
</dbReference>
<dbReference type="PANTHER" id="PTHR34772:SF1">
    <property type="entry name" value="RNA-BINDING PROTEIN HFQ"/>
    <property type="match status" value="1"/>
</dbReference>
<dbReference type="Pfam" id="PF17209">
    <property type="entry name" value="Hfq"/>
    <property type="match status" value="1"/>
</dbReference>
<dbReference type="SUPFAM" id="SSF50182">
    <property type="entry name" value="Sm-like ribonucleoproteins"/>
    <property type="match status" value="1"/>
</dbReference>
<dbReference type="PROSITE" id="PS52002">
    <property type="entry name" value="SM"/>
    <property type="match status" value="1"/>
</dbReference>
<feature type="chain" id="PRO_1000190357" description="RNA-binding protein Hfq">
    <location>
        <begin position="1"/>
        <end position="102"/>
    </location>
</feature>
<feature type="domain" description="Sm" evidence="2">
    <location>
        <begin position="9"/>
        <end position="68"/>
    </location>
</feature>
<feature type="region of interest" description="Disordered" evidence="3">
    <location>
        <begin position="63"/>
        <end position="102"/>
    </location>
</feature>
<feature type="compositionally biased region" description="Low complexity" evidence="3">
    <location>
        <begin position="70"/>
        <end position="88"/>
    </location>
</feature>
<accession>B5BKI1</accession>
<sequence>MAKGQSLQDPFLNALRRERVPVSIYLVNGIKLQGQIESFDQFVILLKNTVSQMVYKHAISTVVPSRPVSHHSNNAGGGASNNYHHGSNAQGSTAQQDSEETE</sequence>
<comment type="function">
    <text evidence="1">RNA chaperone that binds small regulatory RNA (sRNAs) and mRNAs to facilitate mRNA translational regulation in response to envelope stress, environmental stress and changes in metabolite concentrations. Also binds with high specificity to tRNAs.</text>
</comment>
<comment type="subunit">
    <text evidence="1">Homohexamer.</text>
</comment>
<comment type="similarity">
    <text evidence="1">Belongs to the Hfq family.</text>
</comment>
<proteinExistence type="inferred from homology"/>
<name>HFQ_SALPK</name>